<dbReference type="EC" id="3.4.23.36" evidence="1"/>
<dbReference type="EMBL" id="AL157959">
    <property type="protein sequence ID" value="CAM07889.1"/>
    <property type="molecule type" value="Genomic_DNA"/>
</dbReference>
<dbReference type="PIR" id="C81982">
    <property type="entry name" value="C81982"/>
</dbReference>
<dbReference type="SMR" id="P65264"/>
<dbReference type="EnsemblBacteria" id="CAM07889">
    <property type="protein sequence ID" value="CAM07889"/>
    <property type="gene ID" value="NMA0623"/>
</dbReference>
<dbReference type="KEGG" id="nma:NMA0623"/>
<dbReference type="HOGENOM" id="CLU_083252_4_0_4"/>
<dbReference type="UniPathway" id="UPA00665"/>
<dbReference type="Proteomes" id="UP000000626">
    <property type="component" value="Chromosome"/>
</dbReference>
<dbReference type="GO" id="GO:0005886">
    <property type="term" value="C:plasma membrane"/>
    <property type="evidence" value="ECO:0007669"/>
    <property type="project" value="UniProtKB-SubCell"/>
</dbReference>
<dbReference type="GO" id="GO:0004190">
    <property type="term" value="F:aspartic-type endopeptidase activity"/>
    <property type="evidence" value="ECO:0007669"/>
    <property type="project" value="UniProtKB-UniRule"/>
</dbReference>
<dbReference type="GO" id="GO:0006508">
    <property type="term" value="P:proteolysis"/>
    <property type="evidence" value="ECO:0007669"/>
    <property type="project" value="UniProtKB-KW"/>
</dbReference>
<dbReference type="HAMAP" id="MF_00161">
    <property type="entry name" value="LspA"/>
    <property type="match status" value="1"/>
</dbReference>
<dbReference type="InterPro" id="IPR001872">
    <property type="entry name" value="Peptidase_A8"/>
</dbReference>
<dbReference type="NCBIfam" id="TIGR00077">
    <property type="entry name" value="lspA"/>
    <property type="match status" value="1"/>
</dbReference>
<dbReference type="PANTHER" id="PTHR33695">
    <property type="entry name" value="LIPOPROTEIN SIGNAL PEPTIDASE"/>
    <property type="match status" value="1"/>
</dbReference>
<dbReference type="PANTHER" id="PTHR33695:SF1">
    <property type="entry name" value="LIPOPROTEIN SIGNAL PEPTIDASE"/>
    <property type="match status" value="1"/>
</dbReference>
<dbReference type="Pfam" id="PF01252">
    <property type="entry name" value="Peptidase_A8"/>
    <property type="match status" value="1"/>
</dbReference>
<dbReference type="PRINTS" id="PR00781">
    <property type="entry name" value="LIPOSIGPTASE"/>
</dbReference>
<dbReference type="PROSITE" id="PS00855">
    <property type="entry name" value="SPASE_II"/>
    <property type="match status" value="1"/>
</dbReference>
<organism>
    <name type="scientific">Neisseria meningitidis serogroup A / serotype 4A (strain DSM 15465 / Z2491)</name>
    <dbReference type="NCBI Taxonomy" id="122587"/>
    <lineage>
        <taxon>Bacteria</taxon>
        <taxon>Pseudomonadati</taxon>
        <taxon>Pseudomonadota</taxon>
        <taxon>Betaproteobacteria</taxon>
        <taxon>Neisseriales</taxon>
        <taxon>Neisseriaceae</taxon>
        <taxon>Neisseria</taxon>
    </lineage>
</organism>
<accession>P65264</accession>
<accession>A1IQ63</accession>
<accession>Q9JVY3</accession>
<accession>Q9JXY8</accession>
<keyword id="KW-0064">Aspartyl protease</keyword>
<keyword id="KW-0997">Cell inner membrane</keyword>
<keyword id="KW-1003">Cell membrane</keyword>
<keyword id="KW-0378">Hydrolase</keyword>
<keyword id="KW-0472">Membrane</keyword>
<keyword id="KW-0645">Protease</keyword>
<keyword id="KW-0812">Transmembrane</keyword>
<keyword id="KW-1133">Transmembrane helix</keyword>
<gene>
    <name evidence="1" type="primary">lspA</name>
    <name type="synonym">lsp</name>
    <name type="ordered locus">NMA0623</name>
</gene>
<feature type="chain" id="PRO_0000178799" description="Lipoprotein signal peptidase">
    <location>
        <begin position="1"/>
        <end position="165"/>
    </location>
</feature>
<feature type="transmembrane region" description="Helical" evidence="1">
    <location>
        <begin position="11"/>
        <end position="31"/>
    </location>
</feature>
<feature type="transmembrane region" description="Helical" evidence="1">
    <location>
        <begin position="41"/>
        <end position="61"/>
    </location>
</feature>
<feature type="transmembrane region" description="Helical" evidence="1">
    <location>
        <begin position="64"/>
        <end position="84"/>
    </location>
</feature>
<feature type="transmembrane region" description="Helical" evidence="1">
    <location>
        <begin position="92"/>
        <end position="112"/>
    </location>
</feature>
<feature type="transmembrane region" description="Helical" evidence="1">
    <location>
        <begin position="132"/>
        <end position="152"/>
    </location>
</feature>
<feature type="active site" evidence="1">
    <location>
        <position position="122"/>
    </location>
</feature>
<feature type="active site" evidence="1">
    <location>
        <position position="140"/>
    </location>
</feature>
<protein>
    <recommendedName>
        <fullName evidence="1">Lipoprotein signal peptidase</fullName>
        <ecNumber evidence="1">3.4.23.36</ecNumber>
    </recommendedName>
    <alternativeName>
        <fullName evidence="1">Prolipoprotein signal peptidase</fullName>
    </alternativeName>
    <alternativeName>
        <fullName evidence="1">Signal peptidase II</fullName>
        <shortName evidence="1">SPase II</shortName>
    </alternativeName>
</protein>
<sequence length="165" mass="18600">MSSSVSSKTRYWVLALAAIVLDQWSKWAVLSSFQYRERVNVIPSFFDLTLVYNPGAAFSFLADQGGWQKYFFLVLAVAVSAYLVRAILRDEFATLGKTGAAMIIGGALGNVIDRLIHGHVVDFLLFYWQNWFYPAFNIADSFICVGAVLAVLDNIVHRKTQEEKY</sequence>
<comment type="function">
    <text evidence="1">This protein specifically catalyzes the removal of signal peptides from prolipoproteins.</text>
</comment>
<comment type="catalytic activity">
    <reaction evidence="1">
        <text>Release of signal peptides from bacterial membrane prolipoproteins. Hydrolyzes -Xaa-Yaa-Zaa-|-(S,diacylglyceryl)Cys-, in which Xaa is hydrophobic (preferably Leu), and Yaa (Ala or Ser) and Zaa (Gly or Ala) have small, neutral side chains.</text>
        <dbReference type="EC" id="3.4.23.36"/>
    </reaction>
</comment>
<comment type="pathway">
    <text evidence="1">Protein modification; lipoprotein biosynthesis (signal peptide cleavage).</text>
</comment>
<comment type="subcellular location">
    <subcellularLocation>
        <location evidence="1">Cell inner membrane</location>
        <topology evidence="1">Multi-pass membrane protein</topology>
    </subcellularLocation>
</comment>
<comment type="similarity">
    <text evidence="1">Belongs to the peptidase A8 family.</text>
</comment>
<reference key="1">
    <citation type="journal article" date="2000" name="Nature">
        <title>Complete DNA sequence of a serogroup A strain of Neisseria meningitidis Z2491.</title>
        <authorList>
            <person name="Parkhill J."/>
            <person name="Achtman M."/>
            <person name="James K.D."/>
            <person name="Bentley S.D."/>
            <person name="Churcher C.M."/>
            <person name="Klee S.R."/>
            <person name="Morelli G."/>
            <person name="Basham D."/>
            <person name="Brown D."/>
            <person name="Chillingworth T."/>
            <person name="Davies R.M."/>
            <person name="Davis P."/>
            <person name="Devlin K."/>
            <person name="Feltwell T."/>
            <person name="Hamlin N."/>
            <person name="Holroyd S."/>
            <person name="Jagels K."/>
            <person name="Leather S."/>
            <person name="Moule S."/>
            <person name="Mungall K.L."/>
            <person name="Quail M.A."/>
            <person name="Rajandream M.A."/>
            <person name="Rutherford K.M."/>
            <person name="Simmonds M."/>
            <person name="Skelton J."/>
            <person name="Whitehead S."/>
            <person name="Spratt B.G."/>
            <person name="Barrell B.G."/>
        </authorList>
    </citation>
    <scope>NUCLEOTIDE SEQUENCE [LARGE SCALE GENOMIC DNA]</scope>
    <source>
        <strain>DSM 15465 / Z2491</strain>
    </source>
</reference>
<evidence type="ECO:0000255" key="1">
    <source>
        <dbReference type="HAMAP-Rule" id="MF_00161"/>
    </source>
</evidence>
<name>LSPA_NEIMA</name>
<proteinExistence type="inferred from homology"/>